<comment type="function">
    <text evidence="1">IF-3 binds to the 30S ribosomal subunit and shifts the equilibrium between 70S ribosomes and their 50S and 30S subunits in favor of the free subunits, thus enhancing the availability of 30S subunits on which protein synthesis initiation begins.</text>
</comment>
<comment type="subunit">
    <text evidence="1">Monomer.</text>
</comment>
<comment type="subcellular location">
    <subcellularLocation>
        <location evidence="1">Cytoplasm</location>
    </subcellularLocation>
</comment>
<comment type="similarity">
    <text evidence="1">Belongs to the IF-3 family.</text>
</comment>
<dbReference type="EMBL" id="CR954246">
    <property type="protein sequence ID" value="CAI86472.1"/>
    <property type="molecule type" value="Genomic_DNA"/>
</dbReference>
<dbReference type="SMR" id="Q3IL80"/>
<dbReference type="STRING" id="326442.PSHAa1397"/>
<dbReference type="KEGG" id="pha:PSHAa1397"/>
<dbReference type="PATRIC" id="fig|326442.8.peg.1352"/>
<dbReference type="eggNOG" id="COG0290">
    <property type="taxonomic scope" value="Bacteria"/>
</dbReference>
<dbReference type="HOGENOM" id="CLU_054919_3_2_6"/>
<dbReference type="Proteomes" id="UP000006843">
    <property type="component" value="Chromosome I"/>
</dbReference>
<dbReference type="GO" id="GO:0005829">
    <property type="term" value="C:cytosol"/>
    <property type="evidence" value="ECO:0007669"/>
    <property type="project" value="TreeGrafter"/>
</dbReference>
<dbReference type="GO" id="GO:0016020">
    <property type="term" value="C:membrane"/>
    <property type="evidence" value="ECO:0007669"/>
    <property type="project" value="TreeGrafter"/>
</dbReference>
<dbReference type="GO" id="GO:0043022">
    <property type="term" value="F:ribosome binding"/>
    <property type="evidence" value="ECO:0007669"/>
    <property type="project" value="TreeGrafter"/>
</dbReference>
<dbReference type="GO" id="GO:0003743">
    <property type="term" value="F:translation initiation factor activity"/>
    <property type="evidence" value="ECO:0007669"/>
    <property type="project" value="UniProtKB-UniRule"/>
</dbReference>
<dbReference type="GO" id="GO:0032790">
    <property type="term" value="P:ribosome disassembly"/>
    <property type="evidence" value="ECO:0007669"/>
    <property type="project" value="TreeGrafter"/>
</dbReference>
<dbReference type="FunFam" id="3.10.20.80:FF:000001">
    <property type="entry name" value="Translation initiation factor IF-3"/>
    <property type="match status" value="1"/>
</dbReference>
<dbReference type="FunFam" id="3.30.110.10:FF:000001">
    <property type="entry name" value="Translation initiation factor IF-3"/>
    <property type="match status" value="1"/>
</dbReference>
<dbReference type="Gene3D" id="3.30.110.10">
    <property type="entry name" value="Translation initiation factor 3 (IF-3), C-terminal domain"/>
    <property type="match status" value="1"/>
</dbReference>
<dbReference type="Gene3D" id="3.10.20.80">
    <property type="entry name" value="Translation initiation factor 3 (IF-3), N-terminal domain"/>
    <property type="match status" value="1"/>
</dbReference>
<dbReference type="HAMAP" id="MF_00080">
    <property type="entry name" value="IF_3"/>
    <property type="match status" value="1"/>
</dbReference>
<dbReference type="InterPro" id="IPR036788">
    <property type="entry name" value="T_IF-3_C_sf"/>
</dbReference>
<dbReference type="InterPro" id="IPR036787">
    <property type="entry name" value="T_IF-3_N_sf"/>
</dbReference>
<dbReference type="InterPro" id="IPR019813">
    <property type="entry name" value="Translation_initiation_fac3_CS"/>
</dbReference>
<dbReference type="InterPro" id="IPR001288">
    <property type="entry name" value="Translation_initiation_fac_3"/>
</dbReference>
<dbReference type="InterPro" id="IPR019815">
    <property type="entry name" value="Translation_initiation_fac_3_C"/>
</dbReference>
<dbReference type="InterPro" id="IPR019814">
    <property type="entry name" value="Translation_initiation_fac_3_N"/>
</dbReference>
<dbReference type="NCBIfam" id="TIGR00168">
    <property type="entry name" value="infC"/>
    <property type="match status" value="1"/>
</dbReference>
<dbReference type="PANTHER" id="PTHR10938">
    <property type="entry name" value="TRANSLATION INITIATION FACTOR IF-3"/>
    <property type="match status" value="1"/>
</dbReference>
<dbReference type="PANTHER" id="PTHR10938:SF0">
    <property type="entry name" value="TRANSLATION INITIATION FACTOR IF-3, MITOCHONDRIAL"/>
    <property type="match status" value="1"/>
</dbReference>
<dbReference type="Pfam" id="PF00707">
    <property type="entry name" value="IF3_C"/>
    <property type="match status" value="1"/>
</dbReference>
<dbReference type="Pfam" id="PF05198">
    <property type="entry name" value="IF3_N"/>
    <property type="match status" value="1"/>
</dbReference>
<dbReference type="SUPFAM" id="SSF55200">
    <property type="entry name" value="Translation initiation factor IF3, C-terminal domain"/>
    <property type="match status" value="1"/>
</dbReference>
<dbReference type="SUPFAM" id="SSF54364">
    <property type="entry name" value="Translation initiation factor IF3, N-terminal domain"/>
    <property type="match status" value="1"/>
</dbReference>
<dbReference type="PROSITE" id="PS00938">
    <property type="entry name" value="IF3"/>
    <property type="match status" value="1"/>
</dbReference>
<proteinExistence type="inferred from homology"/>
<sequence length="181" mass="20599">MRGGKKGQQTAQKNRINEEITAQEVRLIDIDGEQAGIQSLKDAQTMADAAGVDLVEISPNAEPPVCRIMDYGKFIFEKSKELKEQKKKQKQIQIKEIKFRPGTDEGDYQVKLRNLRKFLEAGDKAKITIRFRGREMAHQEIGIELLNRIKGDLEELAVVESFPNRVEGRQMVMMMAPVAKK</sequence>
<keyword id="KW-0963">Cytoplasm</keyword>
<keyword id="KW-0396">Initiation factor</keyword>
<keyword id="KW-0648">Protein biosynthesis</keyword>
<keyword id="KW-1185">Reference proteome</keyword>
<protein>
    <recommendedName>
        <fullName evidence="1">Translation initiation factor IF-3</fullName>
    </recommendedName>
</protein>
<feature type="chain" id="PRO_1000004561" description="Translation initiation factor IF-3">
    <location>
        <begin position="1"/>
        <end position="181"/>
    </location>
</feature>
<evidence type="ECO:0000255" key="1">
    <source>
        <dbReference type="HAMAP-Rule" id="MF_00080"/>
    </source>
</evidence>
<accession>Q3IL80</accession>
<gene>
    <name evidence="1" type="primary">infC</name>
    <name type="ordered locus">PSHAa1397</name>
</gene>
<organism>
    <name type="scientific">Pseudoalteromonas translucida (strain TAC 125)</name>
    <dbReference type="NCBI Taxonomy" id="326442"/>
    <lineage>
        <taxon>Bacteria</taxon>
        <taxon>Pseudomonadati</taxon>
        <taxon>Pseudomonadota</taxon>
        <taxon>Gammaproteobacteria</taxon>
        <taxon>Alteromonadales</taxon>
        <taxon>Pseudoalteromonadaceae</taxon>
        <taxon>Pseudoalteromonas</taxon>
    </lineage>
</organism>
<reference key="1">
    <citation type="journal article" date="2005" name="Genome Res.">
        <title>Coping with cold: the genome of the versatile marine Antarctica bacterium Pseudoalteromonas haloplanktis TAC125.</title>
        <authorList>
            <person name="Medigue C."/>
            <person name="Krin E."/>
            <person name="Pascal G."/>
            <person name="Barbe V."/>
            <person name="Bernsel A."/>
            <person name="Bertin P.N."/>
            <person name="Cheung F."/>
            <person name="Cruveiller S."/>
            <person name="D'Amico S."/>
            <person name="Duilio A."/>
            <person name="Fang G."/>
            <person name="Feller G."/>
            <person name="Ho C."/>
            <person name="Mangenot S."/>
            <person name="Marino G."/>
            <person name="Nilsson J."/>
            <person name="Parrilli E."/>
            <person name="Rocha E.P.C."/>
            <person name="Rouy Z."/>
            <person name="Sekowska A."/>
            <person name="Tutino M.L."/>
            <person name="Vallenet D."/>
            <person name="von Heijne G."/>
            <person name="Danchin A."/>
        </authorList>
    </citation>
    <scope>NUCLEOTIDE SEQUENCE [LARGE SCALE GENOMIC DNA]</scope>
    <source>
        <strain>TAC 125</strain>
    </source>
</reference>
<name>IF3_PSET1</name>